<keyword id="KW-0067">ATP-binding</keyword>
<keyword id="KW-0315">Glutamine amidotransferase</keyword>
<keyword id="KW-0436">Ligase</keyword>
<keyword id="KW-0460">Magnesium</keyword>
<keyword id="KW-0479">Metal-binding</keyword>
<keyword id="KW-0547">Nucleotide-binding</keyword>
<keyword id="KW-0665">Pyrimidine biosynthesis</keyword>
<keyword id="KW-1185">Reference proteome</keyword>
<name>PYRG_PARUW</name>
<protein>
    <recommendedName>
        <fullName evidence="1">CTP synthase</fullName>
        <ecNumber evidence="1">6.3.4.2</ecNumber>
    </recommendedName>
    <alternativeName>
        <fullName evidence="1">Cytidine 5'-triphosphate synthase</fullName>
    </alternativeName>
    <alternativeName>
        <fullName evidence="1">Cytidine triphosphate synthetase</fullName>
        <shortName evidence="1">CTP synthetase</shortName>
        <shortName evidence="1">CTPS</shortName>
    </alternativeName>
    <alternativeName>
        <fullName evidence="1">UTP--ammonia ligase</fullName>
    </alternativeName>
</protein>
<evidence type="ECO:0000255" key="1">
    <source>
        <dbReference type="HAMAP-Rule" id="MF_01227"/>
    </source>
</evidence>
<evidence type="ECO:0000305" key="2"/>
<feature type="chain" id="PRO_0000266182" description="CTP synthase">
    <location>
        <begin position="1"/>
        <end position="542"/>
    </location>
</feature>
<feature type="domain" description="Glutamine amidotransferase type-1" evidence="1">
    <location>
        <begin position="301"/>
        <end position="538"/>
    </location>
</feature>
<feature type="region of interest" description="Amidoligase domain" evidence="1">
    <location>
        <begin position="1"/>
        <end position="269"/>
    </location>
</feature>
<feature type="active site" description="Nucleophile; for glutamine hydrolysis" evidence="1">
    <location>
        <position position="385"/>
    </location>
</feature>
<feature type="active site" evidence="1">
    <location>
        <position position="511"/>
    </location>
</feature>
<feature type="active site" evidence="1">
    <location>
        <position position="513"/>
    </location>
</feature>
<feature type="binding site" evidence="1">
    <location>
        <position position="14"/>
    </location>
    <ligand>
        <name>CTP</name>
        <dbReference type="ChEBI" id="CHEBI:37563"/>
        <note>allosteric inhibitor</note>
    </ligand>
</feature>
<feature type="binding site" evidence="1">
    <location>
        <position position="14"/>
    </location>
    <ligand>
        <name>UTP</name>
        <dbReference type="ChEBI" id="CHEBI:46398"/>
    </ligand>
</feature>
<feature type="binding site" evidence="1">
    <location>
        <begin position="15"/>
        <end position="20"/>
    </location>
    <ligand>
        <name>ATP</name>
        <dbReference type="ChEBI" id="CHEBI:30616"/>
    </ligand>
</feature>
<feature type="binding site" evidence="1">
    <location>
        <position position="72"/>
    </location>
    <ligand>
        <name>ATP</name>
        <dbReference type="ChEBI" id="CHEBI:30616"/>
    </ligand>
</feature>
<feature type="binding site" evidence="1">
    <location>
        <position position="72"/>
    </location>
    <ligand>
        <name>Mg(2+)</name>
        <dbReference type="ChEBI" id="CHEBI:18420"/>
    </ligand>
</feature>
<feature type="binding site" evidence="1">
    <location>
        <position position="143"/>
    </location>
    <ligand>
        <name>Mg(2+)</name>
        <dbReference type="ChEBI" id="CHEBI:18420"/>
    </ligand>
</feature>
<feature type="binding site" evidence="1">
    <location>
        <begin position="150"/>
        <end position="152"/>
    </location>
    <ligand>
        <name>CTP</name>
        <dbReference type="ChEBI" id="CHEBI:37563"/>
        <note>allosteric inhibitor</note>
    </ligand>
</feature>
<feature type="binding site" evidence="1">
    <location>
        <begin position="189"/>
        <end position="194"/>
    </location>
    <ligand>
        <name>CTP</name>
        <dbReference type="ChEBI" id="CHEBI:37563"/>
        <note>allosteric inhibitor</note>
    </ligand>
</feature>
<feature type="binding site" evidence="1">
    <location>
        <begin position="189"/>
        <end position="194"/>
    </location>
    <ligand>
        <name>UTP</name>
        <dbReference type="ChEBI" id="CHEBI:46398"/>
    </ligand>
</feature>
<feature type="binding site" evidence="1">
    <location>
        <position position="225"/>
    </location>
    <ligand>
        <name>CTP</name>
        <dbReference type="ChEBI" id="CHEBI:37563"/>
        <note>allosteric inhibitor</note>
    </ligand>
</feature>
<feature type="binding site" evidence="1">
    <location>
        <position position="225"/>
    </location>
    <ligand>
        <name>UTP</name>
        <dbReference type="ChEBI" id="CHEBI:46398"/>
    </ligand>
</feature>
<feature type="binding site" evidence="1">
    <location>
        <begin position="241"/>
        <end position="243"/>
    </location>
    <ligand>
        <name>ATP</name>
        <dbReference type="ChEBI" id="CHEBI:30616"/>
    </ligand>
</feature>
<feature type="binding site" evidence="1">
    <location>
        <position position="358"/>
    </location>
    <ligand>
        <name>L-glutamine</name>
        <dbReference type="ChEBI" id="CHEBI:58359"/>
    </ligand>
</feature>
<feature type="binding site" evidence="1">
    <location>
        <begin position="386"/>
        <end position="389"/>
    </location>
    <ligand>
        <name>L-glutamine</name>
        <dbReference type="ChEBI" id="CHEBI:58359"/>
    </ligand>
</feature>
<feature type="binding site" evidence="1">
    <location>
        <position position="409"/>
    </location>
    <ligand>
        <name>L-glutamine</name>
        <dbReference type="ChEBI" id="CHEBI:58359"/>
    </ligand>
</feature>
<feature type="binding site" evidence="1">
    <location>
        <position position="466"/>
    </location>
    <ligand>
        <name>L-glutamine</name>
        <dbReference type="ChEBI" id="CHEBI:58359"/>
    </ligand>
</feature>
<reference key="1">
    <citation type="journal article" date="2004" name="Science">
        <title>Illuminating the evolutionary history of chlamydiae.</title>
        <authorList>
            <person name="Horn M."/>
            <person name="Collingro A."/>
            <person name="Schmitz-Esser S."/>
            <person name="Beier C.L."/>
            <person name="Purkhold U."/>
            <person name="Fartmann B."/>
            <person name="Brandt P."/>
            <person name="Nyakatura G.J."/>
            <person name="Droege M."/>
            <person name="Frishman D."/>
            <person name="Rattei T."/>
            <person name="Mewes H.-W."/>
            <person name="Wagner M."/>
        </authorList>
    </citation>
    <scope>NUCLEOTIDE SEQUENCE [LARGE SCALE GENOMIC DNA]</scope>
    <source>
        <strain>UWE25</strain>
    </source>
</reference>
<comment type="function">
    <text evidence="1">Catalyzes the ATP-dependent amination of UTP to CTP with either L-glutamine or ammonia as the source of nitrogen. Regulates intracellular CTP levels through interactions with the four ribonucleotide triphosphates.</text>
</comment>
<comment type="catalytic activity">
    <reaction evidence="1">
        <text>UTP + L-glutamine + ATP + H2O = CTP + L-glutamate + ADP + phosphate + 2 H(+)</text>
        <dbReference type="Rhea" id="RHEA:26426"/>
        <dbReference type="ChEBI" id="CHEBI:15377"/>
        <dbReference type="ChEBI" id="CHEBI:15378"/>
        <dbReference type="ChEBI" id="CHEBI:29985"/>
        <dbReference type="ChEBI" id="CHEBI:30616"/>
        <dbReference type="ChEBI" id="CHEBI:37563"/>
        <dbReference type="ChEBI" id="CHEBI:43474"/>
        <dbReference type="ChEBI" id="CHEBI:46398"/>
        <dbReference type="ChEBI" id="CHEBI:58359"/>
        <dbReference type="ChEBI" id="CHEBI:456216"/>
        <dbReference type="EC" id="6.3.4.2"/>
    </reaction>
</comment>
<comment type="catalytic activity">
    <reaction evidence="1">
        <text>L-glutamine + H2O = L-glutamate + NH4(+)</text>
        <dbReference type="Rhea" id="RHEA:15889"/>
        <dbReference type="ChEBI" id="CHEBI:15377"/>
        <dbReference type="ChEBI" id="CHEBI:28938"/>
        <dbReference type="ChEBI" id="CHEBI:29985"/>
        <dbReference type="ChEBI" id="CHEBI:58359"/>
    </reaction>
</comment>
<comment type="catalytic activity">
    <reaction evidence="1">
        <text>UTP + NH4(+) + ATP = CTP + ADP + phosphate + 2 H(+)</text>
        <dbReference type="Rhea" id="RHEA:16597"/>
        <dbReference type="ChEBI" id="CHEBI:15378"/>
        <dbReference type="ChEBI" id="CHEBI:28938"/>
        <dbReference type="ChEBI" id="CHEBI:30616"/>
        <dbReference type="ChEBI" id="CHEBI:37563"/>
        <dbReference type="ChEBI" id="CHEBI:43474"/>
        <dbReference type="ChEBI" id="CHEBI:46398"/>
        <dbReference type="ChEBI" id="CHEBI:456216"/>
    </reaction>
</comment>
<comment type="activity regulation">
    <text evidence="1">Allosterically activated by GTP, when glutamine is the substrate; GTP has no effect on the reaction when ammonia is the substrate. The allosteric effector GTP functions by stabilizing the protein conformation that binds the tetrahedral intermediate(s) formed during glutamine hydrolysis. Inhibited by the product CTP, via allosteric rather than competitive inhibition.</text>
</comment>
<comment type="pathway">
    <text evidence="1">Pyrimidine metabolism; CTP biosynthesis via de novo pathway; CTP from UDP: step 2/2.</text>
</comment>
<comment type="subunit">
    <text evidence="1">Homotetramer.</text>
</comment>
<comment type="miscellaneous">
    <text evidence="1">CTPSs have evolved a hybrid strategy for distinguishing between UTP and CTP. The overlapping regions of the product feedback inhibitory and substrate sites recognize a common feature in both compounds, the triphosphate moiety. To differentiate isosteric substrate and product pyrimidine rings, an additional pocket far from the expected kinase/ligase catalytic site, specifically recognizes the cytosine and ribose portions of the product inhibitor.</text>
</comment>
<comment type="similarity">
    <text evidence="1">Belongs to the CTP synthase family.</text>
</comment>
<comment type="sequence caution" evidence="2">
    <conflict type="erroneous initiation">
        <sequence resource="EMBL-CDS" id="CAF23548"/>
    </conflict>
</comment>
<dbReference type="EC" id="6.3.4.2" evidence="1"/>
<dbReference type="EMBL" id="BX908798">
    <property type="protein sequence ID" value="CAF23548.1"/>
    <property type="status" value="ALT_INIT"/>
    <property type="molecule type" value="Genomic_DNA"/>
</dbReference>
<dbReference type="RefSeq" id="WP_044044911.1">
    <property type="nucleotide sequence ID" value="NC_005861.2"/>
</dbReference>
<dbReference type="SMR" id="Q6MD01"/>
<dbReference type="STRING" id="264201.pc0824"/>
<dbReference type="KEGG" id="pcu:PC_RS03965"/>
<dbReference type="eggNOG" id="COG0504">
    <property type="taxonomic scope" value="Bacteria"/>
</dbReference>
<dbReference type="HOGENOM" id="CLU_011675_5_0_0"/>
<dbReference type="OrthoDB" id="9801107at2"/>
<dbReference type="UniPathway" id="UPA00159">
    <property type="reaction ID" value="UER00277"/>
</dbReference>
<dbReference type="Proteomes" id="UP000000529">
    <property type="component" value="Chromosome"/>
</dbReference>
<dbReference type="GO" id="GO:0005829">
    <property type="term" value="C:cytosol"/>
    <property type="evidence" value="ECO:0007669"/>
    <property type="project" value="TreeGrafter"/>
</dbReference>
<dbReference type="GO" id="GO:0005524">
    <property type="term" value="F:ATP binding"/>
    <property type="evidence" value="ECO:0007669"/>
    <property type="project" value="UniProtKB-KW"/>
</dbReference>
<dbReference type="GO" id="GO:0003883">
    <property type="term" value="F:CTP synthase activity"/>
    <property type="evidence" value="ECO:0007669"/>
    <property type="project" value="UniProtKB-UniRule"/>
</dbReference>
<dbReference type="GO" id="GO:0004359">
    <property type="term" value="F:glutaminase activity"/>
    <property type="evidence" value="ECO:0007669"/>
    <property type="project" value="RHEA"/>
</dbReference>
<dbReference type="GO" id="GO:0042802">
    <property type="term" value="F:identical protein binding"/>
    <property type="evidence" value="ECO:0007669"/>
    <property type="project" value="TreeGrafter"/>
</dbReference>
<dbReference type="GO" id="GO:0046872">
    <property type="term" value="F:metal ion binding"/>
    <property type="evidence" value="ECO:0007669"/>
    <property type="project" value="UniProtKB-KW"/>
</dbReference>
<dbReference type="GO" id="GO:0044210">
    <property type="term" value="P:'de novo' CTP biosynthetic process"/>
    <property type="evidence" value="ECO:0007669"/>
    <property type="project" value="UniProtKB-UniRule"/>
</dbReference>
<dbReference type="GO" id="GO:0019856">
    <property type="term" value="P:pyrimidine nucleobase biosynthetic process"/>
    <property type="evidence" value="ECO:0007669"/>
    <property type="project" value="TreeGrafter"/>
</dbReference>
<dbReference type="CDD" id="cd03113">
    <property type="entry name" value="CTPS_N"/>
    <property type="match status" value="1"/>
</dbReference>
<dbReference type="CDD" id="cd01746">
    <property type="entry name" value="GATase1_CTP_Synthase"/>
    <property type="match status" value="1"/>
</dbReference>
<dbReference type="FunFam" id="3.40.50.300:FF:000009">
    <property type="entry name" value="CTP synthase"/>
    <property type="match status" value="1"/>
</dbReference>
<dbReference type="FunFam" id="3.40.50.880:FF:000002">
    <property type="entry name" value="CTP synthase"/>
    <property type="match status" value="1"/>
</dbReference>
<dbReference type="Gene3D" id="3.40.50.880">
    <property type="match status" value="1"/>
</dbReference>
<dbReference type="Gene3D" id="3.40.50.300">
    <property type="entry name" value="P-loop containing nucleotide triphosphate hydrolases"/>
    <property type="match status" value="1"/>
</dbReference>
<dbReference type="HAMAP" id="MF_01227">
    <property type="entry name" value="PyrG"/>
    <property type="match status" value="1"/>
</dbReference>
<dbReference type="InterPro" id="IPR029062">
    <property type="entry name" value="Class_I_gatase-like"/>
</dbReference>
<dbReference type="InterPro" id="IPR004468">
    <property type="entry name" value="CTP_synthase"/>
</dbReference>
<dbReference type="InterPro" id="IPR017456">
    <property type="entry name" value="CTP_synthase_N"/>
</dbReference>
<dbReference type="InterPro" id="IPR017926">
    <property type="entry name" value="GATASE"/>
</dbReference>
<dbReference type="InterPro" id="IPR033828">
    <property type="entry name" value="GATase1_CTP_Synthase"/>
</dbReference>
<dbReference type="InterPro" id="IPR027417">
    <property type="entry name" value="P-loop_NTPase"/>
</dbReference>
<dbReference type="NCBIfam" id="NF003792">
    <property type="entry name" value="PRK05380.1"/>
    <property type="match status" value="1"/>
</dbReference>
<dbReference type="NCBIfam" id="TIGR00337">
    <property type="entry name" value="PyrG"/>
    <property type="match status" value="1"/>
</dbReference>
<dbReference type="PANTHER" id="PTHR11550">
    <property type="entry name" value="CTP SYNTHASE"/>
    <property type="match status" value="1"/>
</dbReference>
<dbReference type="PANTHER" id="PTHR11550:SF0">
    <property type="entry name" value="CTP SYNTHASE-RELATED"/>
    <property type="match status" value="1"/>
</dbReference>
<dbReference type="Pfam" id="PF06418">
    <property type="entry name" value="CTP_synth_N"/>
    <property type="match status" value="1"/>
</dbReference>
<dbReference type="Pfam" id="PF00117">
    <property type="entry name" value="GATase"/>
    <property type="match status" value="1"/>
</dbReference>
<dbReference type="SUPFAM" id="SSF52317">
    <property type="entry name" value="Class I glutamine amidotransferase-like"/>
    <property type="match status" value="1"/>
</dbReference>
<dbReference type="SUPFAM" id="SSF52540">
    <property type="entry name" value="P-loop containing nucleoside triphosphate hydrolases"/>
    <property type="match status" value="1"/>
</dbReference>
<dbReference type="PROSITE" id="PS51273">
    <property type="entry name" value="GATASE_TYPE_1"/>
    <property type="match status" value="1"/>
</dbReference>
<organism>
    <name type="scientific">Protochlamydia amoebophila (strain UWE25)</name>
    <dbReference type="NCBI Taxonomy" id="264201"/>
    <lineage>
        <taxon>Bacteria</taxon>
        <taxon>Pseudomonadati</taxon>
        <taxon>Chlamydiota</taxon>
        <taxon>Chlamydiia</taxon>
        <taxon>Parachlamydiales</taxon>
        <taxon>Parachlamydiaceae</taxon>
        <taxon>Candidatus Protochlamydia</taxon>
    </lineage>
</organism>
<accession>Q6MD01</accession>
<gene>
    <name evidence="1" type="primary">pyrG</name>
    <name type="ordered locus">pc0824</name>
</gene>
<sequence>MQTKYIFITGGVCSSLGKGLTSAAIGLLLEKKGLRVSMLKLDPYLNVDPGTMSPFQHGEVYVTDDGAETDLDLGHYYRYTNSFLSKASNATSGQIYNTVIKRERHGDYLGKTVQVIPHITNEIKQRIVNCGKQQENIDVVLVEIGGTAGDIESLPFLEAIRQFTYDHRNNCLNIHLTYVPYLKAAGEVKTKPSQHSVQVLRGIGIFPDIIVCRCEVNLSDEVKDKISLFCNVNRRAVIEEKDVEHSIYEVPLDLHKQGIDALICELLHLPNPSINLSEWEKILETIKNPKGTVTVGIVGKYVQHQDAYKSVFESLTHGALAAGYKLQIKRFEADKLPLDDNQLAKTIEGCDGYLVPGGFGERGWLGKIHTAKLCREKKIPYFGICLGMQVMAVEFARHVVGLNEANSTEFDPDTIHPVISLLSEQRGLQDLGGTMRLGAYICDLKLHTKAYQAYKSSQISERHRHRYEFNNTYKEQMEKAGFVVAGTLKGENLCEIAEVKDHPWMIGVQFHPEFKSKPTDPHPLFRDFIQAMIIYHKSQHGK</sequence>
<proteinExistence type="inferred from homology"/>